<accession>Q6CJA8</accession>
<name>HOG1_KLULA</name>
<keyword id="KW-0010">Activator</keyword>
<keyword id="KW-0067">ATP-binding</keyword>
<keyword id="KW-0963">Cytoplasm</keyword>
<keyword id="KW-0418">Kinase</keyword>
<keyword id="KW-0547">Nucleotide-binding</keyword>
<keyword id="KW-0539">Nucleus</keyword>
<keyword id="KW-0597">Phosphoprotein</keyword>
<keyword id="KW-1185">Reference proteome</keyword>
<keyword id="KW-0723">Serine/threonine-protein kinase</keyword>
<keyword id="KW-0804">Transcription</keyword>
<keyword id="KW-0805">Transcription regulation</keyword>
<keyword id="KW-0808">Transferase</keyword>
<proteinExistence type="inferred from homology"/>
<dbReference type="EC" id="2.7.11.24" evidence="2"/>
<dbReference type="EMBL" id="CR382126">
    <property type="protein sequence ID" value="CAG98689.1"/>
    <property type="molecule type" value="Genomic_DNA"/>
</dbReference>
<dbReference type="RefSeq" id="XP_455981.1">
    <property type="nucleotide sequence ID" value="XM_455981.1"/>
</dbReference>
<dbReference type="SMR" id="Q6CJA8"/>
<dbReference type="FunCoup" id="Q6CJA8">
    <property type="interactions" value="775"/>
</dbReference>
<dbReference type="STRING" id="284590.Q6CJA8"/>
<dbReference type="PaxDb" id="284590-Q6CJA8"/>
<dbReference type="KEGG" id="kla:KLLA0_F20053g"/>
<dbReference type="eggNOG" id="KOG0660">
    <property type="taxonomic scope" value="Eukaryota"/>
</dbReference>
<dbReference type="HOGENOM" id="CLU_000288_181_1_1"/>
<dbReference type="InParanoid" id="Q6CJA8"/>
<dbReference type="OMA" id="NRYTDLN"/>
<dbReference type="Proteomes" id="UP000000598">
    <property type="component" value="Chromosome F"/>
</dbReference>
<dbReference type="GO" id="GO:0005737">
    <property type="term" value="C:cytoplasm"/>
    <property type="evidence" value="ECO:0007669"/>
    <property type="project" value="UniProtKB-SubCell"/>
</dbReference>
<dbReference type="GO" id="GO:0005634">
    <property type="term" value="C:nucleus"/>
    <property type="evidence" value="ECO:0007669"/>
    <property type="project" value="UniProtKB-SubCell"/>
</dbReference>
<dbReference type="GO" id="GO:0005524">
    <property type="term" value="F:ATP binding"/>
    <property type="evidence" value="ECO:0007669"/>
    <property type="project" value="UniProtKB-KW"/>
</dbReference>
<dbReference type="GO" id="GO:0004707">
    <property type="term" value="F:MAP kinase activity"/>
    <property type="evidence" value="ECO:0007669"/>
    <property type="project" value="UniProtKB-EC"/>
</dbReference>
<dbReference type="GO" id="GO:0106310">
    <property type="term" value="F:protein serine kinase activity"/>
    <property type="evidence" value="ECO:0007669"/>
    <property type="project" value="RHEA"/>
</dbReference>
<dbReference type="GO" id="GO:0051403">
    <property type="term" value="P:stress-activated MAPK cascade"/>
    <property type="evidence" value="ECO:0007669"/>
    <property type="project" value="InterPro"/>
</dbReference>
<dbReference type="CDD" id="cd07856">
    <property type="entry name" value="STKc_Sty1_Hog1"/>
    <property type="match status" value="1"/>
</dbReference>
<dbReference type="FunFam" id="1.10.510.10:FF:000049">
    <property type="entry name" value="Mitogen-activated protein kinase"/>
    <property type="match status" value="1"/>
</dbReference>
<dbReference type="FunFam" id="3.30.200.20:FF:000050">
    <property type="entry name" value="Mitogen-activated protein kinase"/>
    <property type="match status" value="1"/>
</dbReference>
<dbReference type="Gene3D" id="3.30.200.20">
    <property type="entry name" value="Phosphorylase Kinase, domain 1"/>
    <property type="match status" value="1"/>
</dbReference>
<dbReference type="Gene3D" id="1.10.510.10">
    <property type="entry name" value="Transferase(Phosphotransferase) domain 1"/>
    <property type="match status" value="1"/>
</dbReference>
<dbReference type="InterPro" id="IPR011009">
    <property type="entry name" value="Kinase-like_dom_sf"/>
</dbReference>
<dbReference type="InterPro" id="IPR050117">
    <property type="entry name" value="MAP_kinase"/>
</dbReference>
<dbReference type="InterPro" id="IPR003527">
    <property type="entry name" value="MAP_kinase_CS"/>
</dbReference>
<dbReference type="InterPro" id="IPR008352">
    <property type="entry name" value="MAPK_p38-like"/>
</dbReference>
<dbReference type="InterPro" id="IPR038783">
    <property type="entry name" value="MAPK_Sty1/Hog1"/>
</dbReference>
<dbReference type="InterPro" id="IPR000719">
    <property type="entry name" value="Prot_kinase_dom"/>
</dbReference>
<dbReference type="InterPro" id="IPR017441">
    <property type="entry name" value="Protein_kinase_ATP_BS"/>
</dbReference>
<dbReference type="InterPro" id="IPR008271">
    <property type="entry name" value="Ser/Thr_kinase_AS"/>
</dbReference>
<dbReference type="PANTHER" id="PTHR24055">
    <property type="entry name" value="MITOGEN-ACTIVATED PROTEIN KINASE"/>
    <property type="match status" value="1"/>
</dbReference>
<dbReference type="Pfam" id="PF00069">
    <property type="entry name" value="Pkinase"/>
    <property type="match status" value="1"/>
</dbReference>
<dbReference type="PRINTS" id="PR01773">
    <property type="entry name" value="P38MAPKINASE"/>
</dbReference>
<dbReference type="SMART" id="SM00220">
    <property type="entry name" value="S_TKc"/>
    <property type="match status" value="1"/>
</dbReference>
<dbReference type="SUPFAM" id="SSF56112">
    <property type="entry name" value="Protein kinase-like (PK-like)"/>
    <property type="match status" value="1"/>
</dbReference>
<dbReference type="PROSITE" id="PS01351">
    <property type="entry name" value="MAPK"/>
    <property type="match status" value="1"/>
</dbReference>
<dbReference type="PROSITE" id="PS00221">
    <property type="entry name" value="MIP"/>
    <property type="match status" value="1"/>
</dbReference>
<dbReference type="PROSITE" id="PS00107">
    <property type="entry name" value="PROTEIN_KINASE_ATP"/>
    <property type="match status" value="1"/>
</dbReference>
<dbReference type="PROSITE" id="PS50011">
    <property type="entry name" value="PROTEIN_KINASE_DOM"/>
    <property type="match status" value="1"/>
</dbReference>
<dbReference type="PROSITE" id="PS00108">
    <property type="entry name" value="PROTEIN_KINASE_ST"/>
    <property type="match status" value="1"/>
</dbReference>
<sequence>MSNEEFIRTQIFGTVFEITNRYTNLNPVGMGAFGLVCSATDTLTSQPVAIKKIMKPFSTSVLAKRTYRELKLLKHLRHENLICLEDIFLSPLEDIYFVTELQGTDLHRLLQTRPLEKQFVQYFLYQILRGLKYVHSAGVIHRDLKPSNILINENCDLKICDFGLARIQDPQMTGYVSTRYYRAPEIMLTWQKYNVEVDIWSAGCIFAEMIEGKPLFPGKDHVHQFSIITDLLGSPPKDVIDTICSENTLKFVTSLPHRDPVPFSSRFQNLEPDAIDLLEKMLVFDPKKRITAADALAHPYLSPYHDPTDEPIAEAKFDWNFNDADLPVDTWRVMMYSEILDFHQIGDPQINTNATFDDQVAAATVAAAEAASKQQQQQQHQTEEQTQQTIASTPPQAQVTPQQLESGANSNSNSNPSFSIGPDPANETLTNFANQADQYVSKFK</sequence>
<feature type="chain" id="PRO_0000289694" description="Mitogen-activated protein kinase HOG1">
    <location>
        <begin position="1"/>
        <end position="444"/>
    </location>
</feature>
<feature type="domain" description="Protein kinase" evidence="5">
    <location>
        <begin position="22"/>
        <end position="301"/>
    </location>
</feature>
<feature type="region of interest" description="Disordered" evidence="7">
    <location>
        <begin position="371"/>
        <end position="444"/>
    </location>
</feature>
<feature type="short sequence motif" description="TXY">
    <location>
        <begin position="173"/>
        <end position="175"/>
    </location>
</feature>
<feature type="compositionally biased region" description="Low complexity" evidence="7">
    <location>
        <begin position="371"/>
        <end position="393"/>
    </location>
</feature>
<feature type="compositionally biased region" description="Polar residues" evidence="7">
    <location>
        <begin position="394"/>
        <end position="405"/>
    </location>
</feature>
<feature type="compositionally biased region" description="Low complexity" evidence="7">
    <location>
        <begin position="406"/>
        <end position="419"/>
    </location>
</feature>
<feature type="compositionally biased region" description="Polar residues" evidence="7">
    <location>
        <begin position="427"/>
        <end position="438"/>
    </location>
</feature>
<feature type="active site" description="Proton acceptor" evidence="5 6">
    <location>
        <position position="143"/>
    </location>
</feature>
<feature type="binding site" evidence="5">
    <location>
        <begin position="28"/>
        <end position="36"/>
    </location>
    <ligand>
        <name>ATP</name>
        <dbReference type="ChEBI" id="CHEBI:30616"/>
    </ligand>
</feature>
<feature type="binding site" evidence="5">
    <location>
        <position position="51"/>
    </location>
    <ligand>
        <name>ATP</name>
        <dbReference type="ChEBI" id="CHEBI:30616"/>
    </ligand>
</feature>
<feature type="modified residue" description="Phosphothreonine" evidence="1">
    <location>
        <position position="173"/>
    </location>
</feature>
<feature type="modified residue" description="Phosphotyrosine" evidence="1">
    <location>
        <position position="175"/>
    </location>
</feature>
<protein>
    <recommendedName>
        <fullName>Mitogen-activated protein kinase HOG1</fullName>
        <shortName>MAP kinase HOG1</shortName>
        <ecNumber evidence="2">2.7.11.24</ecNumber>
    </recommendedName>
</protein>
<evidence type="ECO:0000250" key="1"/>
<evidence type="ECO:0000250" key="2">
    <source>
        <dbReference type="UniProtKB" id="P32485"/>
    </source>
</evidence>
<evidence type="ECO:0000250" key="3">
    <source>
        <dbReference type="UniProtKB" id="Q16539"/>
    </source>
</evidence>
<evidence type="ECO:0000250" key="4">
    <source>
        <dbReference type="UniProtKB" id="Q4WSF6"/>
    </source>
</evidence>
<evidence type="ECO:0000255" key="5">
    <source>
        <dbReference type="PROSITE-ProRule" id="PRU00159"/>
    </source>
</evidence>
<evidence type="ECO:0000255" key="6">
    <source>
        <dbReference type="PROSITE-ProRule" id="PRU10027"/>
    </source>
</evidence>
<evidence type="ECO:0000256" key="7">
    <source>
        <dbReference type="SAM" id="MobiDB-lite"/>
    </source>
</evidence>
<gene>
    <name type="primary">HOG1</name>
    <name type="ordered locus">KLLA0F20053g</name>
</gene>
<reference key="1">
    <citation type="journal article" date="2004" name="Nature">
        <title>Genome evolution in yeasts.</title>
        <authorList>
            <person name="Dujon B."/>
            <person name="Sherman D."/>
            <person name="Fischer G."/>
            <person name="Durrens P."/>
            <person name="Casaregola S."/>
            <person name="Lafontaine I."/>
            <person name="de Montigny J."/>
            <person name="Marck C."/>
            <person name="Neuveglise C."/>
            <person name="Talla E."/>
            <person name="Goffard N."/>
            <person name="Frangeul L."/>
            <person name="Aigle M."/>
            <person name="Anthouard V."/>
            <person name="Babour A."/>
            <person name="Barbe V."/>
            <person name="Barnay S."/>
            <person name="Blanchin S."/>
            <person name="Beckerich J.-M."/>
            <person name="Beyne E."/>
            <person name="Bleykasten C."/>
            <person name="Boisrame A."/>
            <person name="Boyer J."/>
            <person name="Cattolico L."/>
            <person name="Confanioleri F."/>
            <person name="de Daruvar A."/>
            <person name="Despons L."/>
            <person name="Fabre E."/>
            <person name="Fairhead C."/>
            <person name="Ferry-Dumazet H."/>
            <person name="Groppi A."/>
            <person name="Hantraye F."/>
            <person name="Hennequin C."/>
            <person name="Jauniaux N."/>
            <person name="Joyet P."/>
            <person name="Kachouri R."/>
            <person name="Kerrest A."/>
            <person name="Koszul R."/>
            <person name="Lemaire M."/>
            <person name="Lesur I."/>
            <person name="Ma L."/>
            <person name="Muller H."/>
            <person name="Nicaud J.-M."/>
            <person name="Nikolski M."/>
            <person name="Oztas S."/>
            <person name="Ozier-Kalogeropoulos O."/>
            <person name="Pellenz S."/>
            <person name="Potier S."/>
            <person name="Richard G.-F."/>
            <person name="Straub M.-L."/>
            <person name="Suleau A."/>
            <person name="Swennen D."/>
            <person name="Tekaia F."/>
            <person name="Wesolowski-Louvel M."/>
            <person name="Westhof E."/>
            <person name="Wirth B."/>
            <person name="Zeniou-Meyer M."/>
            <person name="Zivanovic Y."/>
            <person name="Bolotin-Fukuhara M."/>
            <person name="Thierry A."/>
            <person name="Bouchier C."/>
            <person name="Caudron B."/>
            <person name="Scarpelli C."/>
            <person name="Gaillardin C."/>
            <person name="Weissenbach J."/>
            <person name="Wincker P."/>
            <person name="Souciet J.-L."/>
        </authorList>
    </citation>
    <scope>NUCLEOTIDE SEQUENCE [LARGE SCALE GENOMIC DNA]</scope>
    <source>
        <strain>ATCC 8585 / CBS 2359 / DSM 70799 / NBRC 1267 / NRRL Y-1140 / WM37</strain>
    </source>
</reference>
<organism>
    <name type="scientific">Kluyveromyces lactis (strain ATCC 8585 / CBS 2359 / DSM 70799 / NBRC 1267 / NRRL Y-1140 / WM37)</name>
    <name type="common">Yeast</name>
    <name type="synonym">Candida sphaerica</name>
    <dbReference type="NCBI Taxonomy" id="284590"/>
    <lineage>
        <taxon>Eukaryota</taxon>
        <taxon>Fungi</taxon>
        <taxon>Dikarya</taxon>
        <taxon>Ascomycota</taxon>
        <taxon>Saccharomycotina</taxon>
        <taxon>Saccharomycetes</taxon>
        <taxon>Saccharomycetales</taxon>
        <taxon>Saccharomycetaceae</taxon>
        <taxon>Kluyveromyces</taxon>
    </lineage>
</organism>
<comment type="function">
    <text evidence="4">Proline-directed serine/threonine-protein kinase involved in a signal transduction pathway that is activated by changes in the osmolarity of the extracellular environment. Controls osmotic regulation of transcription of target genes.</text>
</comment>
<comment type="catalytic activity">
    <reaction evidence="2">
        <text>L-seryl-[protein] + ATP = O-phospho-L-seryl-[protein] + ADP + H(+)</text>
        <dbReference type="Rhea" id="RHEA:17989"/>
        <dbReference type="Rhea" id="RHEA-COMP:9863"/>
        <dbReference type="Rhea" id="RHEA-COMP:11604"/>
        <dbReference type="ChEBI" id="CHEBI:15378"/>
        <dbReference type="ChEBI" id="CHEBI:29999"/>
        <dbReference type="ChEBI" id="CHEBI:30616"/>
        <dbReference type="ChEBI" id="CHEBI:83421"/>
        <dbReference type="ChEBI" id="CHEBI:456216"/>
        <dbReference type="EC" id="2.7.11.24"/>
    </reaction>
    <physiologicalReaction direction="left-to-right" evidence="2">
        <dbReference type="Rhea" id="RHEA:17990"/>
    </physiologicalReaction>
</comment>
<comment type="catalytic activity">
    <reaction evidence="2">
        <text>L-threonyl-[protein] + ATP = O-phospho-L-threonyl-[protein] + ADP + H(+)</text>
        <dbReference type="Rhea" id="RHEA:46608"/>
        <dbReference type="Rhea" id="RHEA-COMP:11060"/>
        <dbReference type="Rhea" id="RHEA-COMP:11605"/>
        <dbReference type="ChEBI" id="CHEBI:15378"/>
        <dbReference type="ChEBI" id="CHEBI:30013"/>
        <dbReference type="ChEBI" id="CHEBI:30616"/>
        <dbReference type="ChEBI" id="CHEBI:61977"/>
        <dbReference type="ChEBI" id="CHEBI:456216"/>
        <dbReference type="EC" id="2.7.11.24"/>
    </reaction>
    <physiologicalReaction direction="left-to-right" evidence="2">
        <dbReference type="Rhea" id="RHEA:46609"/>
    </physiologicalReaction>
</comment>
<comment type="cofactor">
    <cofactor evidence="3">
        <name>Mg(2+)</name>
        <dbReference type="ChEBI" id="CHEBI:18420"/>
    </cofactor>
</comment>
<comment type="activity regulation">
    <text evidence="1">Activated by tyrosine and threonine phosphorylation.</text>
</comment>
<comment type="subcellular location">
    <subcellularLocation>
        <location evidence="1">Cytoplasm</location>
    </subcellularLocation>
    <subcellularLocation>
        <location evidence="1">Nucleus</location>
    </subcellularLocation>
</comment>
<comment type="domain">
    <text>The TXY motif contains the threonine and tyrosine residues whose phosphorylation activates the MAP kinases.</text>
</comment>
<comment type="PTM">
    <text evidence="1">Dually phosphorylated on Thr-173 and Tyr-175, which activates the enzyme.</text>
</comment>
<comment type="similarity">
    <text evidence="5">Belongs to the protein kinase superfamily. Ser/Thr protein kinase family. MAP kinase subfamily. HOG1 sub-subfamily.</text>
</comment>